<organismHost>
    <name type="scientific">Mus musculus</name>
    <name type="common">Mouse</name>
    <dbReference type="NCBI Taxonomy" id="10090"/>
</organismHost>
<sequence length="563" mass="64622">MNNSSELIAAINGFRNSGRFCDINIVINDERINAHRLILSGASEYFSILFSSDFIDSNEYEVNLSHLDYQSVNDLIDYIYGIPLSLTNDSVKYILSTADFLQIGSAITECENYILKNLCSRNCIDFYIYADKYNNKKIETASFNTILRNILRLINDENFKYLTEESMIKILSDDMLNIKNEDFAPLILIKWLESTQQPCTVELLRCLRISLLSPQVIKSLYSHRLVSSIYECITFLNNIAFLDESFPRYNSIELISIGISNSRDKISINCYNRKKNTWEMISSRGYRCSFAVAVMDNIIYMMGGYDQSPYRSSKVIAYNTCTNSWIYDIPELKYPRSNCGGVVDDEYIYCIGGIRDQDSSLISDIDRWKPSKPYWQTYAKMREPKCDMGVAMLNGLIYVIGGVVKGGTCTDTLESLSEDGWMMHRRLPIKMSNMSTIVHAGKIYISGGYTNSSIVNEISNLVLSYNPIYDEWTKLSSLNIPRINPALWSVHNKLYVGGISDDVQTNTSETYDKEKDCWTLDNGHVLPYNYIMYKCEPIKHKYPLEKIQYTNDFLKCLESFIGS</sequence>
<dbReference type="EMBL" id="AF012825">
    <property type="protein sequence ID" value="AAM92455.1"/>
    <property type="molecule type" value="Genomic_DNA"/>
</dbReference>
<dbReference type="RefSeq" id="NP_671669.1">
    <property type="nucleotide sequence ID" value="NC_004105.1"/>
</dbReference>
<dbReference type="SMR" id="Q8JL69"/>
<dbReference type="GeneID" id="951507"/>
<dbReference type="KEGG" id="vg:951507"/>
<dbReference type="Proteomes" id="UP000172110">
    <property type="component" value="Segment"/>
</dbReference>
<dbReference type="GO" id="GO:0030430">
    <property type="term" value="C:host cell cytoplasm"/>
    <property type="evidence" value="ECO:0007669"/>
    <property type="project" value="UniProtKB-SubCell"/>
</dbReference>
<dbReference type="GO" id="GO:0039648">
    <property type="term" value="P:symbiont-mediated perturbation of host ubiquitin-like protein modification"/>
    <property type="evidence" value="ECO:0007669"/>
    <property type="project" value="UniProtKB-KW"/>
</dbReference>
<dbReference type="Gene3D" id="1.25.40.420">
    <property type="match status" value="1"/>
</dbReference>
<dbReference type="Gene3D" id="2.120.10.80">
    <property type="entry name" value="Kelch-type beta propeller"/>
    <property type="match status" value="1"/>
</dbReference>
<dbReference type="Gene3D" id="3.30.710.10">
    <property type="entry name" value="Potassium Channel Kv1.1, Chain A"/>
    <property type="match status" value="1"/>
</dbReference>
<dbReference type="InterPro" id="IPR011705">
    <property type="entry name" value="BACK"/>
</dbReference>
<dbReference type="InterPro" id="IPR000210">
    <property type="entry name" value="BTB/POZ_dom"/>
</dbReference>
<dbReference type="InterPro" id="IPR015915">
    <property type="entry name" value="Kelch-typ_b-propeller"/>
</dbReference>
<dbReference type="InterPro" id="IPR006652">
    <property type="entry name" value="Kelch_1"/>
</dbReference>
<dbReference type="InterPro" id="IPR011333">
    <property type="entry name" value="SKP1/BTB/POZ_sf"/>
</dbReference>
<dbReference type="InterPro" id="IPR024182">
    <property type="entry name" value="Vaccinia_A55R"/>
</dbReference>
<dbReference type="PANTHER" id="PTHR45632:SF3">
    <property type="entry name" value="KELCH-LIKE PROTEIN 32"/>
    <property type="match status" value="1"/>
</dbReference>
<dbReference type="PANTHER" id="PTHR45632">
    <property type="entry name" value="LD33804P"/>
    <property type="match status" value="1"/>
</dbReference>
<dbReference type="Pfam" id="PF07707">
    <property type="entry name" value="BACK"/>
    <property type="match status" value="1"/>
</dbReference>
<dbReference type="Pfam" id="PF00651">
    <property type="entry name" value="BTB"/>
    <property type="match status" value="1"/>
</dbReference>
<dbReference type="Pfam" id="PF01344">
    <property type="entry name" value="Kelch_1"/>
    <property type="match status" value="3"/>
</dbReference>
<dbReference type="Pfam" id="PF13964">
    <property type="entry name" value="Kelch_6"/>
    <property type="match status" value="1"/>
</dbReference>
<dbReference type="PIRSF" id="PIRSF003716">
    <property type="entry name" value="VAC_F3L"/>
    <property type="match status" value="1"/>
</dbReference>
<dbReference type="SMART" id="SM00875">
    <property type="entry name" value="BACK"/>
    <property type="match status" value="1"/>
</dbReference>
<dbReference type="SMART" id="SM00225">
    <property type="entry name" value="BTB"/>
    <property type="match status" value="1"/>
</dbReference>
<dbReference type="SMART" id="SM00612">
    <property type="entry name" value="Kelch"/>
    <property type="match status" value="5"/>
</dbReference>
<dbReference type="SUPFAM" id="SSF117281">
    <property type="entry name" value="Kelch motif"/>
    <property type="match status" value="1"/>
</dbReference>
<dbReference type="SUPFAM" id="SSF54695">
    <property type="entry name" value="POZ domain"/>
    <property type="match status" value="1"/>
</dbReference>
<dbReference type="PROSITE" id="PS50097">
    <property type="entry name" value="BTB"/>
    <property type="match status" value="1"/>
</dbReference>
<gene>
    <name type="primary">KBTB1</name>
    <name type="ordered locus">EVM150</name>
</gene>
<organism>
    <name type="scientific">Ectromelia virus (strain Moscow)</name>
    <name type="common">ECTV</name>
    <name type="synonym">Mousepox virus</name>
    <dbReference type="NCBI Taxonomy" id="265874"/>
    <lineage>
        <taxon>Viruses</taxon>
        <taxon>Varidnaviria</taxon>
        <taxon>Bamfordvirae</taxon>
        <taxon>Nucleocytoviricota</taxon>
        <taxon>Pokkesviricetes</taxon>
        <taxon>Chitovirales</taxon>
        <taxon>Poxviridae</taxon>
        <taxon>Chordopoxvirinae</taxon>
        <taxon>Orthopoxvirus</taxon>
        <taxon>Ectromelia virus</taxon>
    </lineage>
</organism>
<reference key="1">
    <citation type="submission" date="2002-06" db="EMBL/GenBank/DDBJ databases">
        <title>The genomic sequence of Ectromelia virus, the causative agent of mousepox.</title>
        <authorList>
            <person name="Chen N."/>
            <person name="Danila M.I."/>
            <person name="Feng Z."/>
            <person name="Buller M.L."/>
            <person name="Wang C."/>
            <person name="Han X."/>
            <person name="Lefkowitz E."/>
            <person name="Upton C."/>
        </authorList>
    </citation>
    <scope>NUCLEOTIDE SEQUENCE [LARGE SCALE GENOMIC DNA]</scope>
</reference>
<reference key="2">
    <citation type="journal article" date="2008" name="Virology">
        <title>Ectromelia virus BTB/kelch proteins, EVM150 and EVM167, interact with cullin-3-based ubiquitin ligases.</title>
        <authorList>
            <person name="Wilton B.A."/>
            <person name="Campbell S."/>
            <person name="Van Buuren N."/>
            <person name="Garneau R."/>
            <person name="Furukawa M."/>
            <person name="Xiong Y."/>
            <person name="Barry M."/>
        </authorList>
    </citation>
    <scope>FUNCTION</scope>
    <scope>SUBCELLULAR LOCATION</scope>
    <scope>INTERACTION WITH HOST CUL3</scope>
    <scope>DOMAIN BTB AND KELCH</scope>
</reference>
<comment type="function">
    <text evidence="2">Probable substrate-specific adapter of CUL3-containing E3 ubiquitin-protein ligases which mediate the ubiquitination and subsequent proteasomal degradation of host target proteins.</text>
</comment>
<comment type="subunit">
    <text evidence="2">Interacts (via BTB domain) with host CUL3.</text>
</comment>
<comment type="subcellular location">
    <subcellularLocation>
        <location evidence="2">Host cytoplasm</location>
    </subcellularLocation>
</comment>
<comment type="domain">
    <text evidence="2">The BTB domain is responsible for the interaction with CUL3 while the Kelch repeat domains supposely serve to recruit the cellular substrates.</text>
</comment>
<evidence type="ECO:0000255" key="1">
    <source>
        <dbReference type="PROSITE-ProRule" id="PRU00037"/>
    </source>
</evidence>
<evidence type="ECO:0000269" key="2">
    <source>
    </source>
</evidence>
<feature type="chain" id="PRO_0000396133" description="Kelch repeat and BTB domain-containing protein 1">
    <location>
        <begin position="1"/>
        <end position="563"/>
    </location>
</feature>
<feature type="domain" description="BTB" evidence="1">
    <location>
        <begin position="21"/>
        <end position="88"/>
    </location>
</feature>
<feature type="domain" description="BACK">
    <location>
        <begin position="123"/>
        <end position="219"/>
    </location>
</feature>
<feature type="repeat" description="Kelch 1">
    <location>
        <begin position="252"/>
        <end position="297"/>
    </location>
</feature>
<feature type="repeat" description="Kelch 2">
    <location>
        <begin position="298"/>
        <end position="346"/>
    </location>
</feature>
<feature type="repeat" description="Kelch 3">
    <location>
        <begin position="347"/>
        <end position="395"/>
    </location>
</feature>
<feature type="repeat" description="Kelch 4">
    <location>
        <begin position="397"/>
        <end position="441"/>
    </location>
</feature>
<feature type="repeat" description="Kelch 5">
    <location>
        <begin position="442"/>
        <end position="492"/>
    </location>
</feature>
<feature type="repeat" description="Kelch 6">
    <location>
        <begin position="494"/>
        <end position="540"/>
    </location>
</feature>
<keyword id="KW-1035">Host cytoplasm</keyword>
<keyword id="KW-0945">Host-virus interaction</keyword>
<keyword id="KW-0880">Kelch repeat</keyword>
<keyword id="KW-1123">Modulation of host E3 ubiquitin ligases by virus</keyword>
<keyword id="KW-1130">Modulation of host ubiquitin pathway by virus</keyword>
<keyword id="KW-0677">Repeat</keyword>
<keyword id="KW-0833">Ubl conjugation pathway</keyword>
<proteinExistence type="evidence at protein level"/>
<name>KBTB1_ECTVM</name>
<accession>Q8JL69</accession>
<protein>
    <recommendedName>
        <fullName>Kelch repeat and BTB domain-containing protein 1</fullName>
    </recommendedName>
</protein>